<dbReference type="EC" id="3.1.3.5" evidence="1"/>
<dbReference type="EMBL" id="CP000025">
    <property type="protein sequence ID" value="AAW34928.1"/>
    <property type="molecule type" value="Genomic_DNA"/>
</dbReference>
<dbReference type="RefSeq" id="WP_002854555.1">
    <property type="nucleotide sequence ID" value="NC_003912.7"/>
</dbReference>
<dbReference type="SMR" id="Q5HWH7"/>
<dbReference type="KEGG" id="cjr:CJE0339"/>
<dbReference type="HOGENOM" id="CLU_045192_1_2_7"/>
<dbReference type="GO" id="GO:0005737">
    <property type="term" value="C:cytoplasm"/>
    <property type="evidence" value="ECO:0007669"/>
    <property type="project" value="UniProtKB-SubCell"/>
</dbReference>
<dbReference type="GO" id="GO:0008254">
    <property type="term" value="F:3'-nucleotidase activity"/>
    <property type="evidence" value="ECO:0007669"/>
    <property type="project" value="TreeGrafter"/>
</dbReference>
<dbReference type="GO" id="GO:0008253">
    <property type="term" value="F:5'-nucleotidase activity"/>
    <property type="evidence" value="ECO:0007669"/>
    <property type="project" value="UniProtKB-UniRule"/>
</dbReference>
<dbReference type="GO" id="GO:0004309">
    <property type="term" value="F:exopolyphosphatase activity"/>
    <property type="evidence" value="ECO:0007669"/>
    <property type="project" value="TreeGrafter"/>
</dbReference>
<dbReference type="GO" id="GO:0046872">
    <property type="term" value="F:metal ion binding"/>
    <property type="evidence" value="ECO:0007669"/>
    <property type="project" value="UniProtKB-UniRule"/>
</dbReference>
<dbReference type="GO" id="GO:0000166">
    <property type="term" value="F:nucleotide binding"/>
    <property type="evidence" value="ECO:0007669"/>
    <property type="project" value="UniProtKB-KW"/>
</dbReference>
<dbReference type="FunFam" id="3.40.1210.10:FF:000001">
    <property type="entry name" value="5'/3'-nucleotidase SurE"/>
    <property type="match status" value="1"/>
</dbReference>
<dbReference type="Gene3D" id="3.40.1210.10">
    <property type="entry name" value="Survival protein SurE-like phosphatase/nucleotidase"/>
    <property type="match status" value="1"/>
</dbReference>
<dbReference type="HAMAP" id="MF_00060">
    <property type="entry name" value="SurE"/>
    <property type="match status" value="1"/>
</dbReference>
<dbReference type="InterPro" id="IPR030048">
    <property type="entry name" value="SurE"/>
</dbReference>
<dbReference type="InterPro" id="IPR002828">
    <property type="entry name" value="SurE-like_Pase/nucleotidase"/>
</dbReference>
<dbReference type="InterPro" id="IPR036523">
    <property type="entry name" value="SurE-like_sf"/>
</dbReference>
<dbReference type="NCBIfam" id="NF001490">
    <property type="entry name" value="PRK00346.1-4"/>
    <property type="match status" value="1"/>
</dbReference>
<dbReference type="NCBIfam" id="NF001494">
    <property type="entry name" value="PRK00346.2-4"/>
    <property type="match status" value="1"/>
</dbReference>
<dbReference type="NCBIfam" id="TIGR00087">
    <property type="entry name" value="surE"/>
    <property type="match status" value="1"/>
</dbReference>
<dbReference type="PANTHER" id="PTHR30457">
    <property type="entry name" value="5'-NUCLEOTIDASE SURE"/>
    <property type="match status" value="1"/>
</dbReference>
<dbReference type="PANTHER" id="PTHR30457:SF12">
    <property type="entry name" value="5'_3'-NUCLEOTIDASE SURE"/>
    <property type="match status" value="1"/>
</dbReference>
<dbReference type="Pfam" id="PF01975">
    <property type="entry name" value="SurE"/>
    <property type="match status" value="1"/>
</dbReference>
<dbReference type="SUPFAM" id="SSF64167">
    <property type="entry name" value="SurE-like"/>
    <property type="match status" value="1"/>
</dbReference>
<comment type="function">
    <text evidence="1">Nucleotidase that shows phosphatase activity on nucleoside 5'-monophosphates.</text>
</comment>
<comment type="catalytic activity">
    <reaction evidence="1">
        <text>a ribonucleoside 5'-phosphate + H2O = a ribonucleoside + phosphate</text>
        <dbReference type="Rhea" id="RHEA:12484"/>
        <dbReference type="ChEBI" id="CHEBI:15377"/>
        <dbReference type="ChEBI" id="CHEBI:18254"/>
        <dbReference type="ChEBI" id="CHEBI:43474"/>
        <dbReference type="ChEBI" id="CHEBI:58043"/>
        <dbReference type="EC" id="3.1.3.5"/>
    </reaction>
</comment>
<comment type="cofactor">
    <cofactor evidence="1">
        <name>a divalent metal cation</name>
        <dbReference type="ChEBI" id="CHEBI:60240"/>
    </cofactor>
    <text evidence="1">Binds 1 divalent metal cation per subunit.</text>
</comment>
<comment type="subcellular location">
    <subcellularLocation>
        <location evidence="1">Cytoplasm</location>
    </subcellularLocation>
</comment>
<comment type="similarity">
    <text evidence="1">Belongs to the SurE nucleotidase family.</text>
</comment>
<protein>
    <recommendedName>
        <fullName evidence="1">5'-nucleotidase SurE</fullName>
        <ecNumber evidence="1">3.1.3.5</ecNumber>
    </recommendedName>
    <alternativeName>
        <fullName evidence="1">Nucleoside 5'-monophosphate phosphohydrolase</fullName>
    </alternativeName>
</protein>
<evidence type="ECO:0000255" key="1">
    <source>
        <dbReference type="HAMAP-Rule" id="MF_00060"/>
    </source>
</evidence>
<feature type="chain" id="PRO_0000111797" description="5'-nucleotidase SurE">
    <location>
        <begin position="1"/>
        <end position="258"/>
    </location>
</feature>
<feature type="binding site" evidence="1">
    <location>
        <position position="9"/>
    </location>
    <ligand>
        <name>a divalent metal cation</name>
        <dbReference type="ChEBI" id="CHEBI:60240"/>
    </ligand>
</feature>
<feature type="binding site" evidence="1">
    <location>
        <position position="10"/>
    </location>
    <ligand>
        <name>a divalent metal cation</name>
        <dbReference type="ChEBI" id="CHEBI:60240"/>
    </ligand>
</feature>
<feature type="binding site" evidence="1">
    <location>
        <position position="42"/>
    </location>
    <ligand>
        <name>a divalent metal cation</name>
        <dbReference type="ChEBI" id="CHEBI:60240"/>
    </ligand>
</feature>
<feature type="binding site" evidence="1">
    <location>
        <position position="96"/>
    </location>
    <ligand>
        <name>a divalent metal cation</name>
        <dbReference type="ChEBI" id="CHEBI:60240"/>
    </ligand>
</feature>
<accession>Q5HWH7</accession>
<reference key="1">
    <citation type="journal article" date="2005" name="PLoS Biol.">
        <title>Major structural differences and novel potential virulence mechanisms from the genomes of multiple Campylobacter species.</title>
        <authorList>
            <person name="Fouts D.E."/>
            <person name="Mongodin E.F."/>
            <person name="Mandrell R.E."/>
            <person name="Miller W.G."/>
            <person name="Rasko D.A."/>
            <person name="Ravel J."/>
            <person name="Brinkac L.M."/>
            <person name="DeBoy R.T."/>
            <person name="Parker C.T."/>
            <person name="Daugherty S.C."/>
            <person name="Dodson R.J."/>
            <person name="Durkin A.S."/>
            <person name="Madupu R."/>
            <person name="Sullivan S.A."/>
            <person name="Shetty J.U."/>
            <person name="Ayodeji M.A."/>
            <person name="Shvartsbeyn A."/>
            <person name="Schatz M.C."/>
            <person name="Badger J.H."/>
            <person name="Fraser C.M."/>
            <person name="Nelson K.E."/>
        </authorList>
    </citation>
    <scope>NUCLEOTIDE SEQUENCE [LARGE SCALE GENOMIC DNA]</scope>
    <source>
        <strain>RM1221</strain>
    </source>
</reference>
<gene>
    <name evidence="1" type="primary">surE</name>
    <name type="ordered locus">CJE0339</name>
</gene>
<sequence>MKEILITNDDGYESEGLKKLIKMLTKEFKAKITIVAPASEKSACSHSITLTKPLRFVKVGKRFYKLDDGTPADCVYLALHALYKKRLPDLVISGINKGANVGEDITYSGTCAGAMEAVLQGIPAIALSQFYKKSEKELDYKNALQITKKIIQNIFDKGFPLEKKEFLNINFPAKSKIKGIKICKAGKRVYNFEAHSNVNPRGVEYYWLAAANLDFEDEKNSDIALLKKGYATITPIMLDLTAYERMKKVKKWLKANDE</sequence>
<organism>
    <name type="scientific">Campylobacter jejuni (strain RM1221)</name>
    <dbReference type="NCBI Taxonomy" id="195099"/>
    <lineage>
        <taxon>Bacteria</taxon>
        <taxon>Pseudomonadati</taxon>
        <taxon>Campylobacterota</taxon>
        <taxon>Epsilonproteobacteria</taxon>
        <taxon>Campylobacterales</taxon>
        <taxon>Campylobacteraceae</taxon>
        <taxon>Campylobacter</taxon>
    </lineage>
</organism>
<proteinExistence type="inferred from homology"/>
<keyword id="KW-0963">Cytoplasm</keyword>
<keyword id="KW-0378">Hydrolase</keyword>
<keyword id="KW-0479">Metal-binding</keyword>
<keyword id="KW-0547">Nucleotide-binding</keyword>
<name>SURE_CAMJR</name>